<organism>
    <name type="scientific">Caenorhabditis briggsae</name>
    <dbReference type="NCBI Taxonomy" id="6238"/>
    <lineage>
        <taxon>Eukaryota</taxon>
        <taxon>Metazoa</taxon>
        <taxon>Ecdysozoa</taxon>
        <taxon>Nematoda</taxon>
        <taxon>Chromadorea</taxon>
        <taxon>Rhabditida</taxon>
        <taxon>Rhabditina</taxon>
        <taxon>Rhabditomorpha</taxon>
        <taxon>Rhabditoidea</taxon>
        <taxon>Rhabditidae</taxon>
        <taxon>Peloderinae</taxon>
        <taxon>Caenorhabditis</taxon>
    </lineage>
</organism>
<gene>
    <name type="primary">hsp-3</name>
    <name type="ORF">CBG14829</name>
</gene>
<keyword id="KW-0067">ATP-binding</keyword>
<keyword id="KW-0256">Endoplasmic reticulum</keyword>
<keyword id="KW-0547">Nucleotide-binding</keyword>
<keyword id="KW-1185">Reference proteome</keyword>
<keyword id="KW-0732">Signal</keyword>
<keyword id="KW-0346">Stress response</keyword>
<feature type="signal peptide" evidence="3">
    <location>
        <begin position="1"/>
        <end position="17"/>
    </location>
</feature>
<feature type="chain" id="PRO_0000013540" description="Heat shock 70 kDa protein C">
    <location>
        <begin position="18"/>
        <end position="661"/>
    </location>
</feature>
<feature type="region of interest" description="Disordered" evidence="4">
    <location>
        <begin position="618"/>
        <end position="661"/>
    </location>
</feature>
<feature type="short sequence motif" description="Prevents secretion from ER">
    <location>
        <begin position="658"/>
        <end position="661"/>
    </location>
</feature>
<feature type="compositionally biased region" description="Basic and acidic residues" evidence="4">
    <location>
        <begin position="619"/>
        <end position="630"/>
    </location>
</feature>
<feature type="compositionally biased region" description="Acidic residues" evidence="4">
    <location>
        <begin position="649"/>
        <end position="661"/>
    </location>
</feature>
<feature type="sequence conflict" description="In Ref. 2; AAA28075." evidence="5" ref="2">
    <original>L</original>
    <variation>F</variation>
    <location>
        <position position="126"/>
    </location>
</feature>
<feature type="sequence conflict" description="In Ref. 2; AAA28075." evidence="5" ref="2">
    <original>A</original>
    <variation>S</variation>
    <location>
        <position position="140"/>
    </location>
</feature>
<feature type="sequence conflict" description="In Ref. 2; AAA28075." evidence="5" ref="2">
    <original>D</original>
    <variation>V</variation>
    <location>
        <position position="183"/>
    </location>
</feature>
<feature type="sequence conflict" description="In Ref. 2; AAA28075." evidence="5" ref="2">
    <original>TKD</original>
    <variation>LKY</variation>
    <location>
        <begin position="189"/>
        <end position="191"/>
    </location>
</feature>
<feature type="sequence conflict" description="In Ref. 2; AAA28075." evidence="5" ref="2">
    <original>A</original>
    <variation>V</variation>
    <location>
        <position position="196"/>
    </location>
</feature>
<accession>P19208</accession>
<accession>A8XKS6</accession>
<accession>Q617T9</accession>
<protein>
    <recommendedName>
        <fullName>Heat shock 70 kDa protein C</fullName>
    </recommendedName>
</protein>
<name>HSP7C_CAEBR</name>
<reference key="1">
    <citation type="journal article" date="2003" name="PLoS Biol.">
        <title>The genome sequence of Caenorhabditis briggsae: a platform for comparative genomics.</title>
        <authorList>
            <person name="Stein L.D."/>
            <person name="Bao Z."/>
            <person name="Blasiar D."/>
            <person name="Blumenthal T."/>
            <person name="Brent M.R."/>
            <person name="Chen N."/>
            <person name="Chinwalla A."/>
            <person name="Clarke L."/>
            <person name="Clee C."/>
            <person name="Coghlan A."/>
            <person name="Coulson A."/>
            <person name="D'Eustachio P."/>
            <person name="Fitch D.H.A."/>
            <person name="Fulton L.A."/>
            <person name="Fulton R.E."/>
            <person name="Griffiths-Jones S."/>
            <person name="Harris T.W."/>
            <person name="Hillier L.W."/>
            <person name="Kamath R."/>
            <person name="Kuwabara P.E."/>
            <person name="Mardis E.R."/>
            <person name="Marra M.A."/>
            <person name="Miner T.L."/>
            <person name="Minx P."/>
            <person name="Mullikin J.C."/>
            <person name="Plumb R.W."/>
            <person name="Rogers J."/>
            <person name="Schein J.E."/>
            <person name="Sohrmann M."/>
            <person name="Spieth J."/>
            <person name="Stajich J.E."/>
            <person name="Wei C."/>
            <person name="Willey D."/>
            <person name="Wilson R.K."/>
            <person name="Durbin R.M."/>
            <person name="Waterston R.H."/>
        </authorList>
    </citation>
    <scope>NUCLEOTIDE SEQUENCE [LARGE SCALE GENOMIC DNA]</scope>
    <source>
        <strain>AF16</strain>
    </source>
</reference>
<reference key="2">
    <citation type="journal article" date="1990" name="J. Mol. Evol.">
        <title>Functional elements and domains inferred from sequence comparisons of a heat shock gene in two nematodes.</title>
        <authorList>
            <person name="Heschl M.F.P."/>
            <person name="Baillie D.L."/>
        </authorList>
    </citation>
    <scope>NUCLEOTIDE SEQUENCE [GENOMIC DNA] OF 1-441</scope>
</reference>
<comment type="function">
    <text evidence="1">Probably plays a role in facilitating the assembly of multimeric protein complexes inside the ER.</text>
</comment>
<comment type="subcellular location">
    <subcellularLocation>
        <location>Endoplasmic reticulum lumen</location>
    </subcellularLocation>
</comment>
<comment type="PTM">
    <text evidence="2">AMPylated by fic-1.</text>
</comment>
<comment type="similarity">
    <text evidence="5">Belongs to the heat shock protein 70 family.</text>
</comment>
<evidence type="ECO:0000250" key="1"/>
<evidence type="ECO:0000250" key="2">
    <source>
        <dbReference type="UniProtKB" id="P27420"/>
    </source>
</evidence>
<evidence type="ECO:0000255" key="3"/>
<evidence type="ECO:0000256" key="4">
    <source>
        <dbReference type="SAM" id="MobiDB-lite"/>
    </source>
</evidence>
<evidence type="ECO:0000305" key="5"/>
<dbReference type="EMBL" id="HE600983">
    <property type="protein sequence ID" value="CAP33250.1"/>
    <property type="molecule type" value="Genomic_DNA"/>
</dbReference>
<dbReference type="EMBL" id="M26906">
    <property type="protein sequence ID" value="AAA28075.1"/>
    <property type="molecule type" value="Genomic_DNA"/>
</dbReference>
<dbReference type="SMR" id="P19208"/>
<dbReference type="FunCoup" id="P19208">
    <property type="interactions" value="2197"/>
</dbReference>
<dbReference type="STRING" id="6238.P19208"/>
<dbReference type="EnsemblMetazoa" id="CBG14829.1">
    <property type="protein sequence ID" value="CBG14829.1"/>
    <property type="gene ID" value="WBGene00035220"/>
</dbReference>
<dbReference type="KEGG" id="cbr:CBG_14829"/>
<dbReference type="CTD" id="8586807"/>
<dbReference type="WormBase" id="CBG14829">
    <property type="protein sequence ID" value="CBP03479"/>
    <property type="gene ID" value="WBGene00035220"/>
    <property type="gene designation" value="Cbr-hsp-3"/>
</dbReference>
<dbReference type="eggNOG" id="KOG0100">
    <property type="taxonomic scope" value="Eukaryota"/>
</dbReference>
<dbReference type="HOGENOM" id="CLU_005965_7_0_1"/>
<dbReference type="InParanoid" id="P19208"/>
<dbReference type="OMA" id="VQRDIKH"/>
<dbReference type="Proteomes" id="UP000008549">
    <property type="component" value="Unassembled WGS sequence"/>
</dbReference>
<dbReference type="GO" id="GO:0005737">
    <property type="term" value="C:cytoplasm"/>
    <property type="evidence" value="ECO:0000318"/>
    <property type="project" value="GO_Central"/>
</dbReference>
<dbReference type="GO" id="GO:0034663">
    <property type="term" value="C:endoplasmic reticulum chaperone complex"/>
    <property type="evidence" value="ECO:0000318"/>
    <property type="project" value="GO_Central"/>
</dbReference>
<dbReference type="GO" id="GO:0005788">
    <property type="term" value="C:endoplasmic reticulum lumen"/>
    <property type="evidence" value="ECO:0000318"/>
    <property type="project" value="GO_Central"/>
</dbReference>
<dbReference type="GO" id="GO:0016020">
    <property type="term" value="C:membrane"/>
    <property type="evidence" value="ECO:0000318"/>
    <property type="project" value="GO_Central"/>
</dbReference>
<dbReference type="GO" id="GO:0005634">
    <property type="term" value="C:nucleus"/>
    <property type="evidence" value="ECO:0000318"/>
    <property type="project" value="GO_Central"/>
</dbReference>
<dbReference type="GO" id="GO:0005524">
    <property type="term" value="F:ATP binding"/>
    <property type="evidence" value="ECO:0007669"/>
    <property type="project" value="UniProtKB-KW"/>
</dbReference>
<dbReference type="GO" id="GO:0016887">
    <property type="term" value="F:ATP hydrolysis activity"/>
    <property type="evidence" value="ECO:0000318"/>
    <property type="project" value="GO_Central"/>
</dbReference>
<dbReference type="GO" id="GO:0140662">
    <property type="term" value="F:ATP-dependent protein folding chaperone"/>
    <property type="evidence" value="ECO:0007669"/>
    <property type="project" value="InterPro"/>
</dbReference>
<dbReference type="GO" id="GO:0031072">
    <property type="term" value="F:heat shock protein binding"/>
    <property type="evidence" value="ECO:0000318"/>
    <property type="project" value="GO_Central"/>
</dbReference>
<dbReference type="GO" id="GO:0044183">
    <property type="term" value="F:protein folding chaperone"/>
    <property type="evidence" value="ECO:0000318"/>
    <property type="project" value="GO_Central"/>
</dbReference>
<dbReference type="GO" id="GO:0051085">
    <property type="term" value="P:chaperone cofactor-dependent protein refolding"/>
    <property type="evidence" value="ECO:0000318"/>
    <property type="project" value="GO_Central"/>
</dbReference>
<dbReference type="GO" id="GO:0030968">
    <property type="term" value="P:endoplasmic reticulum unfolded protein response"/>
    <property type="evidence" value="ECO:0000318"/>
    <property type="project" value="GO_Central"/>
</dbReference>
<dbReference type="GO" id="GO:0036503">
    <property type="term" value="P:ERAD pathway"/>
    <property type="evidence" value="ECO:0000318"/>
    <property type="project" value="GO_Central"/>
</dbReference>
<dbReference type="GO" id="GO:0036498">
    <property type="term" value="P:IRE1-mediated unfolded protein response"/>
    <property type="evidence" value="ECO:0007669"/>
    <property type="project" value="EnsemblMetazoa"/>
</dbReference>
<dbReference type="GO" id="GO:0042026">
    <property type="term" value="P:protein refolding"/>
    <property type="evidence" value="ECO:0000318"/>
    <property type="project" value="GO_Central"/>
</dbReference>
<dbReference type="CDD" id="cd10241">
    <property type="entry name" value="ASKHA_NBD_HSP70_BiP"/>
    <property type="match status" value="1"/>
</dbReference>
<dbReference type="FunFam" id="3.90.640.10:FF:000153">
    <property type="entry name" value="Endoplasmic reticulum chaperone BiP"/>
    <property type="match status" value="1"/>
</dbReference>
<dbReference type="FunFam" id="2.60.34.10:FF:000002">
    <property type="entry name" value="Heat shock 70 kDa"/>
    <property type="match status" value="1"/>
</dbReference>
<dbReference type="FunFam" id="3.30.420.40:FF:000172">
    <property type="entry name" value="Heat shock 70 kDa protein"/>
    <property type="match status" value="1"/>
</dbReference>
<dbReference type="FunFam" id="3.30.30.30:FF:000001">
    <property type="entry name" value="heat shock 70 kDa protein-like"/>
    <property type="match status" value="1"/>
</dbReference>
<dbReference type="FunFam" id="3.30.420.40:FF:000026">
    <property type="entry name" value="Heat shock protein 70"/>
    <property type="match status" value="1"/>
</dbReference>
<dbReference type="FunFam" id="1.20.1270.10:FF:000056">
    <property type="entry name" value="Putative Hsp70 family ATPase KAR2"/>
    <property type="match status" value="1"/>
</dbReference>
<dbReference type="Gene3D" id="1.20.1270.10">
    <property type="match status" value="1"/>
</dbReference>
<dbReference type="Gene3D" id="3.30.420.40">
    <property type="match status" value="2"/>
</dbReference>
<dbReference type="Gene3D" id="3.90.640.10">
    <property type="entry name" value="Actin, Chain A, domain 4"/>
    <property type="match status" value="1"/>
</dbReference>
<dbReference type="Gene3D" id="2.60.34.10">
    <property type="entry name" value="Substrate Binding Domain Of DNAk, Chain A, domain 1"/>
    <property type="match status" value="1"/>
</dbReference>
<dbReference type="InterPro" id="IPR043129">
    <property type="entry name" value="ATPase_NBD"/>
</dbReference>
<dbReference type="InterPro" id="IPR042050">
    <property type="entry name" value="BIP_NBD"/>
</dbReference>
<dbReference type="InterPro" id="IPR018181">
    <property type="entry name" value="Heat_shock_70_CS"/>
</dbReference>
<dbReference type="InterPro" id="IPR029048">
    <property type="entry name" value="HSP70_C_sf"/>
</dbReference>
<dbReference type="InterPro" id="IPR029047">
    <property type="entry name" value="HSP70_peptide-bd_sf"/>
</dbReference>
<dbReference type="InterPro" id="IPR013126">
    <property type="entry name" value="Hsp_70_fam"/>
</dbReference>
<dbReference type="NCBIfam" id="NF001413">
    <property type="entry name" value="PRK00290.1"/>
    <property type="match status" value="1"/>
</dbReference>
<dbReference type="PANTHER" id="PTHR19375">
    <property type="entry name" value="HEAT SHOCK PROTEIN 70KDA"/>
    <property type="match status" value="1"/>
</dbReference>
<dbReference type="Pfam" id="PF00012">
    <property type="entry name" value="HSP70"/>
    <property type="match status" value="1"/>
</dbReference>
<dbReference type="PRINTS" id="PR00301">
    <property type="entry name" value="HEATSHOCK70"/>
</dbReference>
<dbReference type="SUPFAM" id="SSF53067">
    <property type="entry name" value="Actin-like ATPase domain"/>
    <property type="match status" value="2"/>
</dbReference>
<dbReference type="SUPFAM" id="SSF100934">
    <property type="entry name" value="Heat shock protein 70kD (HSP70), C-terminal subdomain"/>
    <property type="match status" value="1"/>
</dbReference>
<dbReference type="SUPFAM" id="SSF100920">
    <property type="entry name" value="Heat shock protein 70kD (HSP70), peptide-binding domain"/>
    <property type="match status" value="1"/>
</dbReference>
<dbReference type="PROSITE" id="PS00014">
    <property type="entry name" value="ER_TARGET"/>
    <property type="match status" value="1"/>
</dbReference>
<dbReference type="PROSITE" id="PS00297">
    <property type="entry name" value="HSP70_1"/>
    <property type="match status" value="1"/>
</dbReference>
<dbReference type="PROSITE" id="PS00329">
    <property type="entry name" value="HSP70_2"/>
    <property type="match status" value="1"/>
</dbReference>
<dbReference type="PROSITE" id="PS01036">
    <property type="entry name" value="HSP70_3"/>
    <property type="match status" value="1"/>
</dbReference>
<proteinExistence type="inferred from homology"/>
<sequence>MKTLFLLGLIALTAVSVYCEEEEKTEKKETKYGTIIGIDLGTTYSCVGVYKNGRVEIIANDQGNRITPSYVAFSGEQGDRLIGDAAKNQLTINPENTIFDAKRLIGRDYNDKTVQADIKHWPFKVLDKSNKPSVEVKVGADNKQFTPEEVSAMVLVKMKEIAESYLGKEVKHAVVTVPAYFNDAQRQATKDAGTIAGLNVVRIINEPTAAAIAYGLDKKDGERNILVFDLGGGTFDVSMLTIDNGVFEVLATNGDTHLGGEDFDQRVMEYFIKLYKKKSGKDLRKDKRAVQKLRREVEKAKRALSTQHQTKVEIESLFDGEDFSETLTRAKFEELNMDLFRATLKPVQKVLEDSDLKKDDVHEIVLVGGSTRIPKVQQLIKEFFNGKEPSRGINPDEAVAYGAAVQGGVISGEEDTGEIVLLDVNPLTMGIETVGGVMTKLISRNTVIPTKKSQVFSTAADNQPTVTIQVFEGERPMTKDNHQLGKFDLTGIPPAPRGVPQIEVTFEIDVNGILHVTAEDKGTGNKNKITITNDQNRLSPEDIERMINDAEKFAEDDKKVKEKAEARNELESYAYSLKNQIGDKEKLGGKLDEDDKKTIEEAVDEAISWLGSNADASAEELKEQKKELEGKVQPIVSKLYKDGGAGGEEAPEEGSDDKDEL</sequence>